<protein>
    <recommendedName>
        <fullName>Minor capsid protein VP2</fullName>
    </recommendedName>
</protein>
<feature type="chain" id="PRO_0000342117" description="Minor capsid protein VP2">
    <location>
        <begin position="1"/>
        <end position="117"/>
    </location>
</feature>
<accession>Q89924</accession>
<comment type="function">
    <text evidence="1">Minor structural protein that forms a portal-like structure at a unique three-fold axis of symmetry, following binding to the host receptor. The channel formed by VP2 may allow the delivery of the viral genome through the host endosomal membrane.</text>
</comment>
<comment type="subunit">
    <text evidence="1">Homooligomer. The portal-like structure consists in 12 copies of VP2. Interacts with capsid protein VP1.</text>
</comment>
<comment type="subcellular location">
    <subcellularLocation>
        <location evidence="1">Virion</location>
    </subcellularLocation>
    <subcellularLocation>
        <location evidence="2">Host cytoplasm</location>
    </subcellularLocation>
</comment>
<comment type="domain">
    <text evidence="1">The N-terminus domain points away from the virion surface.</text>
</comment>
<comment type="miscellaneous">
    <text evidence="1">Translated by a ribosomal termination-reinitiation process from the bicistronic mRNA coding for VP1 and VP2.</text>
</comment>
<comment type="similarity">
    <text evidence="2">Belongs to the lagovirus VP2 protein family.</text>
</comment>
<sequence>MAFLMSEFIGLGLAGASVLSNALLRRQELQLQRQALENGLVLKADQLGRLGFNPNEVKNVIVGNSFSSNVRLSNMHNDASVVNAYNVYNPASNGIRKKIKSLNNSVKIYNTTGESSV</sequence>
<proteinExistence type="inferred from homology"/>
<organism>
    <name type="scientific">Rabbit hemorrhagic disease virus (strain AST89)</name>
    <name type="common">Ra/LV/RHDV/AST89/1989/SP</name>
    <name type="synonym">RHDV-AST89</name>
    <dbReference type="NCBI Taxonomy" id="314538"/>
    <lineage>
        <taxon>Viruses</taxon>
        <taxon>Riboviria</taxon>
        <taxon>Orthornavirae</taxon>
        <taxon>Pisuviricota</taxon>
        <taxon>Pisoniviricetes</taxon>
        <taxon>Picornavirales</taxon>
        <taxon>Caliciviridae</taxon>
        <taxon>Lagovirus</taxon>
        <taxon>Rabbit hemorrhagic disease virus</taxon>
    </lineage>
</organism>
<reference key="1">
    <citation type="journal article" date="1994" name="J. Gen. Virol.">
        <title>Molecular cloning, sequence and expression of the capsid protein gene from rabbit hemorrhagic disease virus (Spanish isolate AST/89).</title>
        <authorList>
            <person name="Boga J.A."/>
            <person name="Casais R."/>
            <person name="Marin M.S."/>
            <person name="Martin-Alonso J.M."/>
            <person name="Carmenes R."/>
            <person name="Prieto M."/>
            <person name="Parra F."/>
        </authorList>
    </citation>
    <scope>NUCLEOTIDE SEQUENCE [GENOMIC RNA]</scope>
</reference>
<keyword id="KW-1232">Capsid decoration protein</keyword>
<keyword id="KW-0167">Capsid protein</keyword>
<keyword id="KW-1035">Host cytoplasm</keyword>
<keyword id="KW-0946">Virion</keyword>
<evidence type="ECO:0000250" key="1">
    <source>
        <dbReference type="UniProtKB" id="P28711"/>
    </source>
</evidence>
<evidence type="ECO:0000305" key="2"/>
<organismHost>
    <name type="scientific">Oryctolagus cuniculus</name>
    <name type="common">Rabbit</name>
    <dbReference type="NCBI Taxonomy" id="9986"/>
</organismHost>
<name>VP2_RHDVA</name>
<dbReference type="EMBL" id="Z49271">
    <property type="protein sequence ID" value="CAA89266.1"/>
    <property type="molecule type" value="Genomic_RNA"/>
</dbReference>
<dbReference type="PIR" id="S46945">
    <property type="entry name" value="S46945"/>
</dbReference>
<dbReference type="Proteomes" id="UP000008653">
    <property type="component" value="Genome"/>
</dbReference>
<dbReference type="GO" id="GO:0030430">
    <property type="term" value="C:host cell cytoplasm"/>
    <property type="evidence" value="ECO:0007669"/>
    <property type="project" value="UniProtKB-SubCell"/>
</dbReference>
<dbReference type="GO" id="GO:0098021">
    <property type="term" value="C:viral capsid, decoration"/>
    <property type="evidence" value="ECO:0007669"/>
    <property type="project" value="UniProtKB-KW"/>
</dbReference>
<dbReference type="InterPro" id="IPR008558">
    <property type="entry name" value="VP2_lagovirus"/>
</dbReference>
<dbReference type="Pfam" id="PF05801">
    <property type="entry name" value="VP2_lagovir"/>
    <property type="match status" value="1"/>
</dbReference>
<gene>
    <name type="ORF">ORF2</name>
</gene>